<organism>
    <name type="scientific">Yersinia enterocolitica serotype O:8 / biotype 1B (strain NCTC 13174 / 8081)</name>
    <dbReference type="NCBI Taxonomy" id="393305"/>
    <lineage>
        <taxon>Bacteria</taxon>
        <taxon>Pseudomonadati</taxon>
        <taxon>Pseudomonadota</taxon>
        <taxon>Gammaproteobacteria</taxon>
        <taxon>Enterobacterales</taxon>
        <taxon>Yersiniaceae</taxon>
        <taxon>Yersinia</taxon>
    </lineage>
</organism>
<reference key="1">
    <citation type="journal article" date="2006" name="PLoS Genet.">
        <title>The complete genome sequence and comparative genome analysis of the high pathogenicity Yersinia enterocolitica strain 8081.</title>
        <authorList>
            <person name="Thomson N.R."/>
            <person name="Howard S."/>
            <person name="Wren B.W."/>
            <person name="Holden M.T.G."/>
            <person name="Crossman L."/>
            <person name="Challis G.L."/>
            <person name="Churcher C."/>
            <person name="Mungall K."/>
            <person name="Brooks K."/>
            <person name="Chillingworth T."/>
            <person name="Feltwell T."/>
            <person name="Abdellah Z."/>
            <person name="Hauser H."/>
            <person name="Jagels K."/>
            <person name="Maddison M."/>
            <person name="Moule S."/>
            <person name="Sanders M."/>
            <person name="Whitehead S."/>
            <person name="Quail M.A."/>
            <person name="Dougan G."/>
            <person name="Parkhill J."/>
            <person name="Prentice M.B."/>
        </authorList>
    </citation>
    <scope>NUCLEOTIDE SEQUENCE [LARGE SCALE GENOMIC DNA]</scope>
    <source>
        <strain>NCTC 13174 / 8081</strain>
    </source>
</reference>
<name>TSAD_YERE8</name>
<keyword id="KW-0012">Acyltransferase</keyword>
<keyword id="KW-0963">Cytoplasm</keyword>
<keyword id="KW-0408">Iron</keyword>
<keyword id="KW-0479">Metal-binding</keyword>
<keyword id="KW-0808">Transferase</keyword>
<keyword id="KW-0819">tRNA processing</keyword>
<proteinExistence type="inferred from homology"/>
<sequence length="337" mass="35898">MRVLGIETSCDETGIAVYDDETGLLANQLYSQVKLHADYGGVVPELASRDHVRKTVPLIQAALKEANLSAKDIDGVAYTAGPGLVGALLVGATVGRALAFAWGVPAVPVHHMEGHLLAPMLEENAPEFPFVALLVSGGHTQLISVTGIGEYLLLGESVDDAAGEAFDKTAKLLGLDYPGGPMLSRMAQLGTAGRFTFPRPMTDRPGLDFSFSGLKTFAANTIRANGTDDQTRADIARAFEDAVVDTLAIKSKRALEQTGFKRLVIAGGVSANRTLRSKLAEMMQKRGGEVFYARPEFCTDNGAMIAYAGLIRLKSGVNSELSVSVRPRWPLAELPKV</sequence>
<gene>
    <name evidence="1" type="primary">tsaD</name>
    <name type="synonym">gcp</name>
    <name type="ordered locus">YE3681</name>
</gene>
<dbReference type="EC" id="2.3.1.234" evidence="1"/>
<dbReference type="EMBL" id="AM286415">
    <property type="protein sequence ID" value="CAL13708.1"/>
    <property type="molecule type" value="Genomic_DNA"/>
</dbReference>
<dbReference type="RefSeq" id="WP_005160825.1">
    <property type="nucleotide sequence ID" value="NC_008800.1"/>
</dbReference>
<dbReference type="RefSeq" id="YP_001007836.1">
    <property type="nucleotide sequence ID" value="NC_008800.1"/>
</dbReference>
<dbReference type="SMR" id="A1JQW9"/>
<dbReference type="GeneID" id="31410504"/>
<dbReference type="KEGG" id="yen:YE3681"/>
<dbReference type="PATRIC" id="fig|393305.7.peg.3919"/>
<dbReference type="eggNOG" id="COG0533">
    <property type="taxonomic scope" value="Bacteria"/>
</dbReference>
<dbReference type="HOGENOM" id="CLU_023208_0_2_6"/>
<dbReference type="OrthoDB" id="9806197at2"/>
<dbReference type="Proteomes" id="UP000000642">
    <property type="component" value="Chromosome"/>
</dbReference>
<dbReference type="GO" id="GO:0005737">
    <property type="term" value="C:cytoplasm"/>
    <property type="evidence" value="ECO:0007669"/>
    <property type="project" value="UniProtKB-SubCell"/>
</dbReference>
<dbReference type="GO" id="GO:0005506">
    <property type="term" value="F:iron ion binding"/>
    <property type="evidence" value="ECO:0007669"/>
    <property type="project" value="UniProtKB-UniRule"/>
</dbReference>
<dbReference type="GO" id="GO:0061711">
    <property type="term" value="F:N(6)-L-threonylcarbamoyladenine synthase activity"/>
    <property type="evidence" value="ECO:0007669"/>
    <property type="project" value="UniProtKB-EC"/>
</dbReference>
<dbReference type="GO" id="GO:0002949">
    <property type="term" value="P:tRNA threonylcarbamoyladenosine modification"/>
    <property type="evidence" value="ECO:0007669"/>
    <property type="project" value="UniProtKB-UniRule"/>
</dbReference>
<dbReference type="CDD" id="cd24133">
    <property type="entry name" value="ASKHA_NBD_TsaD_bac"/>
    <property type="match status" value="1"/>
</dbReference>
<dbReference type="FunFam" id="3.30.420.40:FF:000031">
    <property type="entry name" value="tRNA N6-adenosine threonylcarbamoyltransferase"/>
    <property type="match status" value="1"/>
</dbReference>
<dbReference type="Gene3D" id="3.30.420.40">
    <property type="match status" value="2"/>
</dbReference>
<dbReference type="HAMAP" id="MF_01445">
    <property type="entry name" value="TsaD"/>
    <property type="match status" value="1"/>
</dbReference>
<dbReference type="InterPro" id="IPR043129">
    <property type="entry name" value="ATPase_NBD"/>
</dbReference>
<dbReference type="InterPro" id="IPR000905">
    <property type="entry name" value="Gcp-like_dom"/>
</dbReference>
<dbReference type="InterPro" id="IPR017861">
    <property type="entry name" value="KAE1/TsaD"/>
</dbReference>
<dbReference type="InterPro" id="IPR017860">
    <property type="entry name" value="Peptidase_M22_CS"/>
</dbReference>
<dbReference type="InterPro" id="IPR022450">
    <property type="entry name" value="TsaD"/>
</dbReference>
<dbReference type="NCBIfam" id="TIGR00329">
    <property type="entry name" value="gcp_kae1"/>
    <property type="match status" value="1"/>
</dbReference>
<dbReference type="NCBIfam" id="TIGR03723">
    <property type="entry name" value="T6A_TsaD_YgjD"/>
    <property type="match status" value="1"/>
</dbReference>
<dbReference type="PANTHER" id="PTHR11735">
    <property type="entry name" value="TRNA N6-ADENOSINE THREONYLCARBAMOYLTRANSFERASE"/>
    <property type="match status" value="1"/>
</dbReference>
<dbReference type="PANTHER" id="PTHR11735:SF6">
    <property type="entry name" value="TRNA N6-ADENOSINE THREONYLCARBAMOYLTRANSFERASE, MITOCHONDRIAL"/>
    <property type="match status" value="1"/>
</dbReference>
<dbReference type="Pfam" id="PF00814">
    <property type="entry name" value="TsaD"/>
    <property type="match status" value="1"/>
</dbReference>
<dbReference type="PRINTS" id="PR00789">
    <property type="entry name" value="OSIALOPTASE"/>
</dbReference>
<dbReference type="SUPFAM" id="SSF53067">
    <property type="entry name" value="Actin-like ATPase domain"/>
    <property type="match status" value="1"/>
</dbReference>
<dbReference type="PROSITE" id="PS01016">
    <property type="entry name" value="GLYCOPROTEASE"/>
    <property type="match status" value="1"/>
</dbReference>
<feature type="chain" id="PRO_0000303623" description="tRNA N6-adenosine threonylcarbamoyltransferase">
    <location>
        <begin position="1"/>
        <end position="337"/>
    </location>
</feature>
<feature type="binding site" evidence="1">
    <location>
        <position position="111"/>
    </location>
    <ligand>
        <name>Fe cation</name>
        <dbReference type="ChEBI" id="CHEBI:24875"/>
    </ligand>
</feature>
<feature type="binding site" evidence="1">
    <location>
        <position position="115"/>
    </location>
    <ligand>
        <name>Fe cation</name>
        <dbReference type="ChEBI" id="CHEBI:24875"/>
    </ligand>
</feature>
<feature type="binding site" evidence="1">
    <location>
        <begin position="134"/>
        <end position="138"/>
    </location>
    <ligand>
        <name>substrate</name>
    </ligand>
</feature>
<feature type="binding site" evidence="1">
    <location>
        <position position="167"/>
    </location>
    <ligand>
        <name>substrate</name>
    </ligand>
</feature>
<feature type="binding site" evidence="1">
    <location>
        <position position="180"/>
    </location>
    <ligand>
        <name>substrate</name>
    </ligand>
</feature>
<feature type="binding site" evidence="1">
    <location>
        <position position="272"/>
    </location>
    <ligand>
        <name>substrate</name>
    </ligand>
</feature>
<feature type="binding site" evidence="1">
    <location>
        <position position="300"/>
    </location>
    <ligand>
        <name>Fe cation</name>
        <dbReference type="ChEBI" id="CHEBI:24875"/>
    </ligand>
</feature>
<evidence type="ECO:0000255" key="1">
    <source>
        <dbReference type="HAMAP-Rule" id="MF_01445"/>
    </source>
</evidence>
<accession>A1JQW9</accession>
<protein>
    <recommendedName>
        <fullName evidence="1">tRNA N6-adenosine threonylcarbamoyltransferase</fullName>
        <ecNumber evidence="1">2.3.1.234</ecNumber>
    </recommendedName>
    <alternativeName>
        <fullName evidence="1">N6-L-threonylcarbamoyladenine synthase</fullName>
        <shortName evidence="1">t(6)A synthase</shortName>
    </alternativeName>
    <alternativeName>
        <fullName evidence="1">t(6)A37 threonylcarbamoyladenosine biosynthesis protein TsaD</fullName>
    </alternativeName>
    <alternativeName>
        <fullName evidence="1">tRNA threonylcarbamoyladenosine biosynthesis protein TsaD</fullName>
    </alternativeName>
</protein>
<comment type="function">
    <text evidence="1">Required for the formation of a threonylcarbamoyl group on adenosine at position 37 (t(6)A37) in tRNAs that read codons beginning with adenine. Is involved in the transfer of the threonylcarbamoyl moiety of threonylcarbamoyl-AMP (TC-AMP) to the N6 group of A37, together with TsaE and TsaB. TsaD likely plays a direct catalytic role in this reaction.</text>
</comment>
<comment type="catalytic activity">
    <reaction evidence="1">
        <text>L-threonylcarbamoyladenylate + adenosine(37) in tRNA = N(6)-L-threonylcarbamoyladenosine(37) in tRNA + AMP + H(+)</text>
        <dbReference type="Rhea" id="RHEA:37059"/>
        <dbReference type="Rhea" id="RHEA-COMP:10162"/>
        <dbReference type="Rhea" id="RHEA-COMP:10163"/>
        <dbReference type="ChEBI" id="CHEBI:15378"/>
        <dbReference type="ChEBI" id="CHEBI:73682"/>
        <dbReference type="ChEBI" id="CHEBI:74411"/>
        <dbReference type="ChEBI" id="CHEBI:74418"/>
        <dbReference type="ChEBI" id="CHEBI:456215"/>
        <dbReference type="EC" id="2.3.1.234"/>
    </reaction>
</comment>
<comment type="cofactor">
    <cofactor evidence="1">
        <name>Fe(2+)</name>
        <dbReference type="ChEBI" id="CHEBI:29033"/>
    </cofactor>
    <text evidence="1">Binds 1 Fe(2+) ion per subunit.</text>
</comment>
<comment type="subcellular location">
    <subcellularLocation>
        <location evidence="1">Cytoplasm</location>
    </subcellularLocation>
</comment>
<comment type="similarity">
    <text evidence="1">Belongs to the KAE1 / TsaD family.</text>
</comment>